<sequence length="280" mass="32351">MSGQMFWGKKEDGKRKRSFQESYETPKVQKCVRKRRPALNVQGQPLPPQRSLEMMSKDQLMSVLMEVMRQHPEVGSTFQAKVSSYQFASEKYQQLLKGKVEQLYSNIPYNRSYDNTNLDDYAFVRMKPYITELLNCLVDCALDNLPPRKSDLHESLKFLESCTQLVLDLPRFESGSNNYYYDKCLEQISHLWCSLIEQISKDIHMVMNTNMEEWITKLNAYNERSNGLLTSAVTLFKSLASDGDLLGDQQNEMESPAYVAGPGLLLESNPSYLMHNKYSM</sequence>
<comment type="function">
    <text evidence="1">Involved in ubiquitin-mediated protein degradation. Regulatory factor in the ubiquitin/proteasome pathway that controls the turnover of proteasome substrates. Targets proteasomes to the nucleus and facilitates the degradation of nuclear proteins (By similarity).</text>
</comment>
<comment type="subunit">
    <text evidence="1">Binds the proteasome.</text>
</comment>
<comment type="subcellular location">
    <subcellularLocation>
        <location evidence="1">Cytoplasm</location>
    </subcellularLocation>
    <subcellularLocation>
        <location evidence="1">Nucleus</location>
    </subcellularLocation>
</comment>
<comment type="similarity">
    <text evidence="3">Belongs to the cut8/STS1 family.</text>
</comment>
<evidence type="ECO:0000250" key="1"/>
<evidence type="ECO:0000256" key="2">
    <source>
        <dbReference type="SAM" id="MobiDB-lite"/>
    </source>
</evidence>
<evidence type="ECO:0000305" key="3"/>
<feature type="chain" id="PRO_0000409404" description="Tethering factor for nuclear proteasome STS1">
    <location>
        <begin position="1"/>
        <end position="280"/>
    </location>
</feature>
<feature type="region of interest" description="Disordered" evidence="2">
    <location>
        <begin position="1"/>
        <end position="27"/>
    </location>
</feature>
<accession>Q6FKQ4</accession>
<dbReference type="EMBL" id="CR380958">
    <property type="protein sequence ID" value="CAG62160.1"/>
    <property type="molecule type" value="Genomic_DNA"/>
</dbReference>
<dbReference type="RefSeq" id="XP_449190.1">
    <property type="nucleotide sequence ID" value="XM_449190.1"/>
</dbReference>
<dbReference type="SMR" id="Q6FKQ4"/>
<dbReference type="FunCoup" id="Q6FKQ4">
    <property type="interactions" value="18"/>
</dbReference>
<dbReference type="STRING" id="284593.Q6FKQ4"/>
<dbReference type="EnsemblFungi" id="CAGL0L09625g-T">
    <property type="protein sequence ID" value="CAGL0L09625g-T-p1"/>
    <property type="gene ID" value="CAGL0L09625g"/>
</dbReference>
<dbReference type="KEGG" id="cgr:2891073"/>
<dbReference type="CGD" id="CAL0135166">
    <property type="gene designation" value="CAGL0L09625g"/>
</dbReference>
<dbReference type="VEuPathDB" id="FungiDB:B1J91_L09625g"/>
<dbReference type="VEuPathDB" id="FungiDB:CAGL0L09625g"/>
<dbReference type="eggNOG" id="ENOG502RNK4">
    <property type="taxonomic scope" value="Eukaryota"/>
</dbReference>
<dbReference type="HOGENOM" id="CLU_054606_2_0_1"/>
<dbReference type="InParanoid" id="Q6FKQ4"/>
<dbReference type="OMA" id="DYTPHFL"/>
<dbReference type="Proteomes" id="UP000002428">
    <property type="component" value="Chromosome L"/>
</dbReference>
<dbReference type="GO" id="GO:0005737">
    <property type="term" value="C:cytoplasm"/>
    <property type="evidence" value="ECO:0007669"/>
    <property type="project" value="UniProtKB-SubCell"/>
</dbReference>
<dbReference type="GO" id="GO:0031965">
    <property type="term" value="C:nuclear membrane"/>
    <property type="evidence" value="ECO:0007669"/>
    <property type="project" value="TreeGrafter"/>
</dbReference>
<dbReference type="GO" id="GO:0070628">
    <property type="term" value="F:proteasome binding"/>
    <property type="evidence" value="ECO:0007669"/>
    <property type="project" value="EnsemblFungi"/>
</dbReference>
<dbReference type="GO" id="GO:0007059">
    <property type="term" value="P:chromosome segregation"/>
    <property type="evidence" value="ECO:0007669"/>
    <property type="project" value="EnsemblFungi"/>
</dbReference>
<dbReference type="GO" id="GO:0071630">
    <property type="term" value="P:nuclear protein quality control by the ubiquitin-proteasome system"/>
    <property type="evidence" value="ECO:0007669"/>
    <property type="project" value="EnsemblFungi"/>
</dbReference>
<dbReference type="GO" id="GO:0031144">
    <property type="term" value="P:proteasome localization"/>
    <property type="evidence" value="ECO:0007669"/>
    <property type="project" value="EnsemblFungi"/>
</dbReference>
<dbReference type="GO" id="GO:0015031">
    <property type="term" value="P:protein transport"/>
    <property type="evidence" value="ECO:0007669"/>
    <property type="project" value="UniProtKB-KW"/>
</dbReference>
<dbReference type="Gene3D" id="1.20.58.1590">
    <property type="entry name" value="Tethering factor for nuclear proteasome Cut8/Sts1"/>
    <property type="match status" value="1"/>
</dbReference>
<dbReference type="InterPro" id="IPR013868">
    <property type="entry name" value="Cut8/Sts1_fam"/>
</dbReference>
<dbReference type="InterPro" id="IPR038422">
    <property type="entry name" value="Cut8/Sts1_sf"/>
</dbReference>
<dbReference type="PANTHER" id="PTHR28032">
    <property type="entry name" value="FI02826P"/>
    <property type="match status" value="1"/>
</dbReference>
<dbReference type="PANTHER" id="PTHR28032:SF1">
    <property type="entry name" value="FI02826P"/>
    <property type="match status" value="1"/>
</dbReference>
<dbReference type="Pfam" id="PF08559">
    <property type="entry name" value="Cut8"/>
    <property type="match status" value="1"/>
</dbReference>
<keyword id="KW-0963">Cytoplasm</keyword>
<keyword id="KW-0539">Nucleus</keyword>
<keyword id="KW-0653">Protein transport</keyword>
<keyword id="KW-1185">Reference proteome</keyword>
<keyword id="KW-0813">Transport</keyword>
<name>STS1_CANGA</name>
<gene>
    <name type="primary">STS1</name>
    <name type="ordered locus">CAGL0L09625g</name>
</gene>
<protein>
    <recommendedName>
        <fullName>Tethering factor for nuclear proteasome STS1</fullName>
    </recommendedName>
</protein>
<organism>
    <name type="scientific">Candida glabrata (strain ATCC 2001 / BCRC 20586 / JCM 3761 / NBRC 0622 / NRRL Y-65 / CBS 138)</name>
    <name type="common">Yeast</name>
    <name type="synonym">Nakaseomyces glabratus</name>
    <dbReference type="NCBI Taxonomy" id="284593"/>
    <lineage>
        <taxon>Eukaryota</taxon>
        <taxon>Fungi</taxon>
        <taxon>Dikarya</taxon>
        <taxon>Ascomycota</taxon>
        <taxon>Saccharomycotina</taxon>
        <taxon>Saccharomycetes</taxon>
        <taxon>Saccharomycetales</taxon>
        <taxon>Saccharomycetaceae</taxon>
        <taxon>Nakaseomyces</taxon>
    </lineage>
</organism>
<proteinExistence type="inferred from homology"/>
<reference key="1">
    <citation type="journal article" date="2004" name="Nature">
        <title>Genome evolution in yeasts.</title>
        <authorList>
            <person name="Dujon B."/>
            <person name="Sherman D."/>
            <person name="Fischer G."/>
            <person name="Durrens P."/>
            <person name="Casaregola S."/>
            <person name="Lafontaine I."/>
            <person name="de Montigny J."/>
            <person name="Marck C."/>
            <person name="Neuveglise C."/>
            <person name="Talla E."/>
            <person name="Goffard N."/>
            <person name="Frangeul L."/>
            <person name="Aigle M."/>
            <person name="Anthouard V."/>
            <person name="Babour A."/>
            <person name="Barbe V."/>
            <person name="Barnay S."/>
            <person name="Blanchin S."/>
            <person name="Beckerich J.-M."/>
            <person name="Beyne E."/>
            <person name="Bleykasten C."/>
            <person name="Boisrame A."/>
            <person name="Boyer J."/>
            <person name="Cattolico L."/>
            <person name="Confanioleri F."/>
            <person name="de Daruvar A."/>
            <person name="Despons L."/>
            <person name="Fabre E."/>
            <person name="Fairhead C."/>
            <person name="Ferry-Dumazet H."/>
            <person name="Groppi A."/>
            <person name="Hantraye F."/>
            <person name="Hennequin C."/>
            <person name="Jauniaux N."/>
            <person name="Joyet P."/>
            <person name="Kachouri R."/>
            <person name="Kerrest A."/>
            <person name="Koszul R."/>
            <person name="Lemaire M."/>
            <person name="Lesur I."/>
            <person name="Ma L."/>
            <person name="Muller H."/>
            <person name="Nicaud J.-M."/>
            <person name="Nikolski M."/>
            <person name="Oztas S."/>
            <person name="Ozier-Kalogeropoulos O."/>
            <person name="Pellenz S."/>
            <person name="Potier S."/>
            <person name="Richard G.-F."/>
            <person name="Straub M.-L."/>
            <person name="Suleau A."/>
            <person name="Swennen D."/>
            <person name="Tekaia F."/>
            <person name="Wesolowski-Louvel M."/>
            <person name="Westhof E."/>
            <person name="Wirth B."/>
            <person name="Zeniou-Meyer M."/>
            <person name="Zivanovic Y."/>
            <person name="Bolotin-Fukuhara M."/>
            <person name="Thierry A."/>
            <person name="Bouchier C."/>
            <person name="Caudron B."/>
            <person name="Scarpelli C."/>
            <person name="Gaillardin C."/>
            <person name="Weissenbach J."/>
            <person name="Wincker P."/>
            <person name="Souciet J.-L."/>
        </authorList>
    </citation>
    <scope>NUCLEOTIDE SEQUENCE [LARGE SCALE GENOMIC DNA]</scope>
    <source>
        <strain>ATCC 2001 / BCRC 20586 / JCM 3761 / NBRC 0622 / NRRL Y-65 / CBS 138</strain>
    </source>
</reference>